<dbReference type="EMBL" id="M19183">
    <property type="status" value="NOT_ANNOTATED_CDS"/>
    <property type="molecule type" value="Genomic_DNA"/>
</dbReference>
<dbReference type="PDB" id="6EDJ">
    <property type="method" value="EM"/>
    <property type="resolution" value="4.52 A"/>
    <property type="chains" value="A/B/C/D=31-179"/>
</dbReference>
<dbReference type="PDBsum" id="6EDJ"/>
<dbReference type="EMDB" id="EMD-9031"/>
<dbReference type="SMR" id="P0C6J4"/>
<dbReference type="Proteomes" id="UP000007542">
    <property type="component" value="Genome"/>
</dbReference>
<dbReference type="GO" id="GO:0005576">
    <property type="term" value="C:extracellular region"/>
    <property type="evidence" value="ECO:0007669"/>
    <property type="project" value="UniProtKB-SubCell"/>
</dbReference>
<dbReference type="GO" id="GO:0043657">
    <property type="term" value="C:host cell"/>
    <property type="evidence" value="ECO:0007669"/>
    <property type="project" value="GOC"/>
</dbReference>
<dbReference type="GO" id="GO:0030430">
    <property type="term" value="C:host cell cytoplasm"/>
    <property type="evidence" value="ECO:0007669"/>
    <property type="project" value="UniProtKB-UniRule"/>
</dbReference>
<dbReference type="GO" id="GO:0042025">
    <property type="term" value="C:host cell nucleus"/>
    <property type="evidence" value="ECO:0007669"/>
    <property type="project" value="UniProtKB-SubCell"/>
</dbReference>
<dbReference type="GO" id="GO:0039619">
    <property type="term" value="C:T=4 icosahedral viral capsid"/>
    <property type="evidence" value="ECO:0007669"/>
    <property type="project" value="UniProtKB-UniRule"/>
</dbReference>
<dbReference type="GO" id="GO:0003677">
    <property type="term" value="F:DNA binding"/>
    <property type="evidence" value="ECO:0007669"/>
    <property type="project" value="UniProtKB-UniRule"/>
</dbReference>
<dbReference type="GO" id="GO:0003723">
    <property type="term" value="F:RNA binding"/>
    <property type="evidence" value="ECO:0007669"/>
    <property type="project" value="UniProtKB-UniRule"/>
</dbReference>
<dbReference type="GO" id="GO:0005198">
    <property type="term" value="F:structural molecule activity"/>
    <property type="evidence" value="ECO:0007669"/>
    <property type="project" value="UniProtKB-UniRule"/>
</dbReference>
<dbReference type="GO" id="GO:0075521">
    <property type="term" value="P:microtubule-dependent intracellular transport of viral material towards nucleus"/>
    <property type="evidence" value="ECO:0007669"/>
    <property type="project" value="UniProtKB-UniRule"/>
</dbReference>
<dbReference type="GO" id="GO:0046718">
    <property type="term" value="P:symbiont entry into host cell"/>
    <property type="evidence" value="ECO:0007669"/>
    <property type="project" value="UniProtKB-UniRule"/>
</dbReference>
<dbReference type="GO" id="GO:0075732">
    <property type="term" value="P:viral penetration into host nucleus"/>
    <property type="evidence" value="ECO:0007669"/>
    <property type="project" value="UniProtKB-UniRule"/>
</dbReference>
<dbReference type="Gene3D" id="1.10.4090.10">
    <property type="entry name" value="Viral capsid, core domain supefamily, Hepatitis B virus"/>
    <property type="match status" value="1"/>
</dbReference>
<dbReference type="HAMAP" id="MF_04076">
    <property type="entry name" value="HBV_HBEAG"/>
    <property type="match status" value="1"/>
</dbReference>
<dbReference type="InterPro" id="IPR013195">
    <property type="entry name" value="Hepatitis_B_virus_capsid_N"/>
</dbReference>
<dbReference type="InterPro" id="IPR002006">
    <property type="entry name" value="Hepatitis_core"/>
</dbReference>
<dbReference type="InterPro" id="IPR036459">
    <property type="entry name" value="Viral_capsid_core_dom_sf_HBV"/>
</dbReference>
<dbReference type="Pfam" id="PF08290">
    <property type="entry name" value="Hep_core_N"/>
    <property type="match status" value="1"/>
</dbReference>
<dbReference type="Pfam" id="PF00906">
    <property type="entry name" value="Hepatitis_core"/>
    <property type="match status" value="3"/>
</dbReference>
<dbReference type="SUPFAM" id="SSF47852">
    <property type="entry name" value="Hepatitis B viral capsid (hbcag)"/>
    <property type="match status" value="1"/>
</dbReference>
<evidence type="ECO:0000250" key="1"/>
<evidence type="ECO:0000255" key="2">
    <source>
        <dbReference type="HAMAP-Rule" id="MF_04076"/>
    </source>
</evidence>
<evidence type="ECO:0000256" key="3">
    <source>
        <dbReference type="SAM" id="MobiDB-lite"/>
    </source>
</evidence>
<feature type="signal peptide" evidence="2">
    <location>
        <begin position="1"/>
        <end position="19"/>
    </location>
</feature>
<feature type="chain" id="PRO_0000324744" description="External core antigen" evidence="2">
    <location>
        <begin position="20"/>
        <end position="218"/>
    </location>
</feature>
<feature type="propeptide" id="PRO_0000324745" evidence="1">
    <location>
        <begin position="190"/>
        <end position="218"/>
    </location>
</feature>
<feature type="repeat" description="1; half-length">
    <location>
        <begin position="190"/>
        <end position="196"/>
    </location>
</feature>
<feature type="repeat" description="2">
    <location>
        <begin position="197"/>
        <end position="204"/>
    </location>
</feature>
<feature type="repeat" description="3">
    <location>
        <begin position="205"/>
        <end position="212"/>
    </location>
</feature>
<feature type="region of interest" description="HBEAG" evidence="2">
    <location>
        <begin position="26"/>
        <end position="28"/>
    </location>
</feature>
<feature type="region of interest" description="Disordered" evidence="3">
    <location>
        <begin position="180"/>
        <end position="218"/>
    </location>
</feature>
<feature type="region of interest" description="3 X 8 AA repeats of S-P-R-R-R-R-S-Q">
    <location>
        <begin position="190"/>
        <end position="212"/>
    </location>
</feature>
<feature type="compositionally biased region" description="Basic residues" evidence="3">
    <location>
        <begin position="180"/>
        <end position="211"/>
    </location>
</feature>
<feature type="site" description="Cleavage; by host" evidence="2">
    <location>
        <begin position="189"/>
        <end position="190"/>
    </location>
</feature>
<feature type="disulfide bond" description="Interchain" evidence="2">
    <location>
        <position position="78"/>
    </location>
</feature>
<feature type="disulfide bond" description="Interchain" evidence="2">
    <location>
        <position position="91"/>
    </location>
</feature>
<protein>
    <recommendedName>
        <fullName evidence="2">External core antigen</fullName>
    </recommendedName>
    <alternativeName>
        <fullName evidence="2">HBeAg</fullName>
    </alternativeName>
    <alternativeName>
        <fullName evidence="2">Precore protein</fullName>
    </alternativeName>
    <alternativeName>
        <fullName evidence="2">p25</fullName>
    </alternativeName>
</protein>
<reference key="1">
    <citation type="journal article" date="1988" name="Virology">
        <title>Sequence comparison of woodchuck hepatitis virus replicative forms shows conservation of the genome.</title>
        <authorList>
            <person name="Cohen J.I."/>
            <person name="Miller R.H."/>
            <person name="Rosenblum B."/>
            <person name="Denniston K."/>
            <person name="Gerin J.L."/>
            <person name="Purcell R.H."/>
        </authorList>
    </citation>
    <scope>NUCLEOTIDE SEQUENCE [GENOMIC DNA]</scope>
</reference>
<sequence length="218" mass="25124">MYLFHLCLVFACVPCPTFQASKLCLGWLWGMDIDPYKEFGSSYQLLNFLPLDFFPDLNALVDTATALYEEELTGREHCSPHHTAIRQALVCWDELTKLIAWMSSNITSEQVRTIIVNHVNDTWGLKVRQSLWFHLSCLTFGQHTVQEFLVSFGVWIRTPAPYRPPNAPILSTLPEHTVIRRRGGARASRSPRRRTPSPRRRRSQSPRRRRSQSPSANC</sequence>
<keyword id="KW-0002">3D-structure</keyword>
<keyword id="KW-0024">Alternative initiation</keyword>
<keyword id="KW-1015">Disulfide bond</keyword>
<keyword id="KW-1048">Host nucleus</keyword>
<keyword id="KW-0945">Host-virus interaction</keyword>
<keyword id="KW-0677">Repeat</keyword>
<keyword id="KW-0964">Secreted</keyword>
<keyword id="KW-0732">Signal</keyword>
<keyword id="KW-0899">Viral immunoevasion</keyword>
<organismHost>
    <name type="scientific">Marmota monax</name>
    <name type="common">Woodchuck</name>
    <dbReference type="NCBI Taxonomy" id="9995"/>
</organismHost>
<comment type="function">
    <text evidence="2">May regulate immune response to the intracellular capsid in acting as a T-cell tolerogen, by having an immunoregulatory effect which prevents destruction of infected cells by cytotoxic T-cells. This immune regulation may predispose to chronicity during perinatal infections and prevent severe liver injury during adult infections.</text>
</comment>
<comment type="subunit">
    <text evidence="2">Homodimerizes.</text>
</comment>
<comment type="subcellular location">
    <subcellularLocation>
        <location evidence="2">Secreted</location>
    </subcellularLocation>
    <subcellularLocation>
        <location evidence="2">Host nucleus</location>
    </subcellularLocation>
</comment>
<comment type="alternative products">
    <event type="alternative initiation"/>
    <isoform>
        <id>P0C6J4-1</id>
        <name>External core antigen</name>
        <sequence type="displayed"/>
    </isoform>
    <isoform>
        <id>P69712-1</id>
        <name>Capsid protein</name>
        <sequence type="external"/>
    </isoform>
</comment>
<comment type="PTM">
    <text evidence="2">Phosphorylated.</text>
</comment>
<comment type="PTM">
    <text evidence="2">Cleaved by host furin.</text>
</comment>
<comment type="similarity">
    <text evidence="2">Belongs to the orthohepadnavirus precore antigen family.</text>
</comment>
<proteinExistence type="evidence at protein level"/>
<accession>P0C6J4</accession>
<name>HBEAG_WHV3</name>
<organism>
    <name type="scientific">Woodchuck hepatitis B virus (isolate 59)</name>
    <name type="common">WHV</name>
    <dbReference type="NCBI Taxonomy" id="10431"/>
    <lineage>
        <taxon>Viruses</taxon>
        <taxon>Riboviria</taxon>
        <taxon>Pararnavirae</taxon>
        <taxon>Artverviricota</taxon>
        <taxon>Revtraviricetes</taxon>
        <taxon>Blubervirales</taxon>
        <taxon>Hepadnaviridae</taxon>
        <taxon>Orthohepadnavirus</taxon>
        <taxon>Woodchuck hepatitis virus</taxon>
    </lineage>
</organism>
<gene>
    <name evidence="2" type="primary">C</name>
</gene>